<accession>Q6EYH9</accession>
<geneLocation type="chloroplast"/>
<sequence>MEALVYTFLLVSTLGIIFFAIFFREPPRISTKKMK</sequence>
<name>PSBT_HOUCO</name>
<organism>
    <name type="scientific">Houttuynia cordata</name>
    <name type="common">Chameleon plant</name>
    <dbReference type="NCBI Taxonomy" id="16752"/>
    <lineage>
        <taxon>Eukaryota</taxon>
        <taxon>Viridiplantae</taxon>
        <taxon>Streptophyta</taxon>
        <taxon>Embryophyta</taxon>
        <taxon>Tracheophyta</taxon>
        <taxon>Spermatophyta</taxon>
        <taxon>Magnoliopsida</taxon>
        <taxon>Magnoliidae</taxon>
        <taxon>Piperales</taxon>
        <taxon>Saururaceae</taxon>
        <taxon>Houttuynia</taxon>
    </lineage>
</organism>
<gene>
    <name evidence="1" type="primary">psbT</name>
</gene>
<feature type="chain" id="PRO_0000217938" description="Photosystem II reaction center protein T">
    <location>
        <begin position="1"/>
        <end position="35"/>
    </location>
</feature>
<feature type="transmembrane region" description="Helical" evidence="1">
    <location>
        <begin position="3"/>
        <end position="23"/>
    </location>
</feature>
<dbReference type="EMBL" id="AF528902">
    <property type="protein sequence ID" value="AAQ09394.1"/>
    <property type="molecule type" value="Genomic_DNA"/>
</dbReference>
<dbReference type="RefSeq" id="YP_009774312.1">
    <property type="nucleotide sequence ID" value="NC_047437.1"/>
</dbReference>
<dbReference type="SMR" id="Q6EYH9"/>
<dbReference type="GeneID" id="54615896"/>
<dbReference type="GO" id="GO:0009535">
    <property type="term" value="C:chloroplast thylakoid membrane"/>
    <property type="evidence" value="ECO:0007669"/>
    <property type="project" value="UniProtKB-SubCell"/>
</dbReference>
<dbReference type="GO" id="GO:0009539">
    <property type="term" value="C:photosystem II reaction center"/>
    <property type="evidence" value="ECO:0007669"/>
    <property type="project" value="InterPro"/>
</dbReference>
<dbReference type="GO" id="GO:0015979">
    <property type="term" value="P:photosynthesis"/>
    <property type="evidence" value="ECO:0007669"/>
    <property type="project" value="UniProtKB-UniRule"/>
</dbReference>
<dbReference type="HAMAP" id="MF_00808">
    <property type="entry name" value="PSII_PsbT"/>
    <property type="match status" value="1"/>
</dbReference>
<dbReference type="InterPro" id="IPR001743">
    <property type="entry name" value="PSII_PsbT"/>
</dbReference>
<dbReference type="InterPro" id="IPR037268">
    <property type="entry name" value="PSII_PsbT_sf"/>
</dbReference>
<dbReference type="PANTHER" id="PTHR36411">
    <property type="match status" value="1"/>
</dbReference>
<dbReference type="PANTHER" id="PTHR36411:SF2">
    <property type="entry name" value="PHOTOSYSTEM II REACTION CENTER PROTEIN T"/>
    <property type="match status" value="1"/>
</dbReference>
<dbReference type="Pfam" id="PF01405">
    <property type="entry name" value="PsbT"/>
    <property type="match status" value="1"/>
</dbReference>
<dbReference type="SUPFAM" id="SSF161029">
    <property type="entry name" value="Photosystem II reaction center protein T, PsbT"/>
    <property type="match status" value="1"/>
</dbReference>
<evidence type="ECO:0000255" key="1">
    <source>
        <dbReference type="HAMAP-Rule" id="MF_00808"/>
    </source>
</evidence>
<reference key="1">
    <citation type="submission" date="2002-07" db="EMBL/GenBank/DDBJ databases">
        <title>Parsing out signal and noise for seed-plant phylogenetic inference.</title>
        <authorList>
            <person name="Graham S.W."/>
            <person name="Rai H.S."/>
            <person name="Ikegami K."/>
            <person name="Reeves P.A."/>
            <person name="Olmstead R.G."/>
        </authorList>
    </citation>
    <scope>NUCLEOTIDE SEQUENCE [GENOMIC DNA]</scope>
</reference>
<comment type="function">
    <text evidence="1">Found at the monomer-monomer interface of the photosystem II (PS II) dimer, plays a role in assembly and dimerization of PSII. PSII is a light-driven water plastoquinone oxidoreductase, using light energy to abstract electrons from H(2)O, generating a proton gradient subsequently used for ATP formation.</text>
</comment>
<comment type="subunit">
    <text evidence="1">PSII is composed of 1 copy each of membrane proteins PsbA, PsbB, PsbC, PsbD, PsbE, PsbF, PsbH, PsbI, PsbJ, PsbK, PsbL, PsbM, PsbT, PsbY, PsbZ, Psb30/Ycf12, at least 3 peripheral proteins of the oxygen-evolving complex and a large number of cofactors. It forms dimeric complexes.</text>
</comment>
<comment type="subcellular location">
    <subcellularLocation>
        <location evidence="1">Plastid</location>
        <location evidence="1">Chloroplast thylakoid membrane</location>
        <topology evidence="1">Single-pass membrane protein</topology>
    </subcellularLocation>
</comment>
<comment type="similarity">
    <text evidence="1">Belongs to the PsbT family.</text>
</comment>
<protein>
    <recommendedName>
        <fullName evidence="1">Photosystem II reaction center protein T</fullName>
        <shortName evidence="1">PSII-T</shortName>
    </recommendedName>
</protein>
<proteinExistence type="inferred from homology"/>
<keyword id="KW-0150">Chloroplast</keyword>
<keyword id="KW-0472">Membrane</keyword>
<keyword id="KW-0602">Photosynthesis</keyword>
<keyword id="KW-0604">Photosystem II</keyword>
<keyword id="KW-0934">Plastid</keyword>
<keyword id="KW-0793">Thylakoid</keyword>
<keyword id="KW-0812">Transmembrane</keyword>
<keyword id="KW-1133">Transmembrane helix</keyword>